<organism>
    <name type="scientific">Invertebrate iridescent virus 6</name>
    <name type="common">IIV-6</name>
    <name type="synonym">Chilo iridescent virus</name>
    <dbReference type="NCBI Taxonomy" id="176652"/>
    <lineage>
        <taxon>Viruses</taxon>
        <taxon>Varidnaviria</taxon>
        <taxon>Bamfordvirae</taxon>
        <taxon>Nucleocytoviricota</taxon>
        <taxon>Megaviricetes</taxon>
        <taxon>Pimascovirales</taxon>
        <taxon>Iridoviridae</taxon>
        <taxon>Betairidovirinae</taxon>
        <taxon>Iridovirus</taxon>
    </lineage>
</organism>
<gene>
    <name type="ORF">IIV6-393L</name>
</gene>
<feature type="chain" id="PRO_0000377757" description="Immediate-early protein ICP-46 homolog">
    <location>
        <begin position="1"/>
        <end position="454"/>
    </location>
</feature>
<feature type="region of interest" description="Disordered" evidence="2">
    <location>
        <begin position="428"/>
        <end position="454"/>
    </location>
</feature>
<feature type="coiled-coil region" evidence="1">
    <location>
        <begin position="330"/>
        <end position="357"/>
    </location>
</feature>
<name>ICP46_IIV6</name>
<reference key="1">
    <citation type="journal article" date="2001" name="Virology">
        <title>Analysis of the first complete DNA sequence of an invertebrate iridovirus: coding strategy of the genome of Chilo iridescent virus.</title>
        <authorList>
            <person name="Jakob N.J."/>
            <person name="Mueller K."/>
            <person name="Bahr U."/>
            <person name="Darai G."/>
        </authorList>
    </citation>
    <scope>NUCLEOTIDE SEQUENCE [LARGE SCALE GENOMIC DNA]</scope>
</reference>
<reference key="2">
    <citation type="journal article" date="2007" name="Virol. J.">
        <title>Comparative genomic analysis of the family Iridoviridae: re-annotating and defining the core set of iridovirus genes.</title>
        <authorList>
            <person name="Eaton H.E."/>
            <person name="Metcalf J."/>
            <person name="Penny E."/>
            <person name="Tcherepanov V."/>
            <person name="Upton C."/>
            <person name="Brunetti C.R."/>
        </authorList>
    </citation>
    <scope>GENOME REANNOTATION</scope>
</reference>
<comment type="similarity">
    <text evidence="3">Belongs to the IIV-6 393L family.</text>
</comment>
<protein>
    <recommendedName>
        <fullName>Immediate-early protein ICP-46 homolog</fullName>
    </recommendedName>
</protein>
<evidence type="ECO:0000255" key="1"/>
<evidence type="ECO:0000256" key="2">
    <source>
        <dbReference type="SAM" id="MobiDB-lite"/>
    </source>
</evidence>
<evidence type="ECO:0000305" key="3"/>
<accession>Q91FD1</accession>
<keyword id="KW-0175">Coiled coil</keyword>
<keyword id="KW-1185">Reference proteome</keyword>
<sequence length="454" mass="52774">MDSKQTKTMNNIVDQVNCLSISSPSKDLEMLNLIEENVTEDPMKHGIRKSHTMEVNGKTLELFCSDNPPQTPLEHQVRGVVFYGSEMILQGFPYSNEQIITEKSTEEEISFLYENNDWTITEAIEGTLIRIFYFNDKWIITTHRKLDAFKSKWGSEKSFGDIFKEAVMIKTKDPQINNDIDVNTLCEKLGLNKHRQYTFLITATDKTRFVCPSTPIPIVYLYAITEKINNKTTIISENDSEMKKWNDWKQESLHLKAPEAIQFVQNLSFPFRCQGLLFFNSKTFESYKLVNKTYQEYFDVRGNIPSVPFAYLHILGNKNKIQMFKQMISEKDIETIEKYEKTIQELIVELHNLYLKRYVEKDTEMKTDKTKHKFLLELHEWFKNQREKCVSTGAIPKIRVTQNVVSKILLESDPPVINRLIKEKIHPSSPTASLSSLSPPSSNNNSPIRSPIRM</sequence>
<organismHost>
    <name type="scientific">Acheta domesticus</name>
    <name type="common">House cricket</name>
    <dbReference type="NCBI Taxonomy" id="6997"/>
</organismHost>
<organismHost>
    <name type="scientific">Chilo suppressalis</name>
    <name type="common">Asiatic rice borer moth</name>
    <dbReference type="NCBI Taxonomy" id="168631"/>
</organismHost>
<organismHost>
    <name type="scientific">Gryllus bimaculatus</name>
    <name type="common">Two-spotted cricket</name>
    <dbReference type="NCBI Taxonomy" id="6999"/>
</organismHost>
<organismHost>
    <name type="scientific">Gryllus campestris</name>
    <dbReference type="NCBI Taxonomy" id="58607"/>
</organismHost>
<organismHost>
    <name type="scientific">Spodoptera frugiperda</name>
    <name type="common">Fall armyworm</name>
    <dbReference type="NCBI Taxonomy" id="7108"/>
</organismHost>
<proteinExistence type="inferred from homology"/>
<dbReference type="EMBL" id="AF303741">
    <property type="protein sequence ID" value="AAK82253.1"/>
    <property type="molecule type" value="Genomic_DNA"/>
</dbReference>
<dbReference type="RefSeq" id="NP_149856.1">
    <property type="nucleotide sequence ID" value="NC_003038.1"/>
</dbReference>
<dbReference type="KEGG" id="vg:1733052"/>
<dbReference type="OrthoDB" id="7735at10239"/>
<dbReference type="Proteomes" id="UP000001359">
    <property type="component" value="Genome"/>
</dbReference>